<sequence length="358" mass="40263">MNFTVGFKPLLGDAHSMDNLEKQLICPICLEMFSKPVVILPCQHNLCRKCANDVFQASNPLWQSRGSTTVSSGGRFRCPSCRHEVVLDRHGVYGLQRNLLVENIIDIYKQESSRPLHSKAEQHLMCEEHEEEKINIYCLSCEVPTCSLCKVFGAHKDCEVAPLPTIYKRQKSELSDGIAMLVAGNDRVQAVITQMEEVCQTIEDNSRRQKQLLNQRFESLCAVLEERKGELLQALAREQEEKLQRVRGLIRQYGDHLEASSKLVETAIQSMEEPQMALYLQQAKELINKVGAMSKVELAGRPEPGYESMEQFTVSVEHVAEMLRTIDFQPGASGEEEEVAPDGDEGSAGQEEERPDGP</sequence>
<protein>
    <recommendedName>
        <fullName>Tripartite motif-containing protein 54</fullName>
    </recommendedName>
</protein>
<name>TRI54_PONAB</name>
<gene>
    <name type="primary">TRIM54</name>
</gene>
<evidence type="ECO:0000250" key="1"/>
<evidence type="ECO:0000255" key="2"/>
<evidence type="ECO:0000255" key="3">
    <source>
        <dbReference type="PROSITE-ProRule" id="PRU00024"/>
    </source>
</evidence>
<evidence type="ECO:0000255" key="4">
    <source>
        <dbReference type="PROSITE-ProRule" id="PRU00175"/>
    </source>
</evidence>
<evidence type="ECO:0000255" key="5">
    <source>
        <dbReference type="PROSITE-ProRule" id="PRU00586"/>
    </source>
</evidence>
<evidence type="ECO:0000256" key="6">
    <source>
        <dbReference type="SAM" id="MobiDB-lite"/>
    </source>
</evidence>
<keyword id="KW-0175">Coiled coil</keyword>
<keyword id="KW-0963">Cytoplasm</keyword>
<keyword id="KW-0206">Cytoskeleton</keyword>
<keyword id="KW-0217">Developmental protein</keyword>
<keyword id="KW-0221">Differentiation</keyword>
<keyword id="KW-0479">Metal-binding</keyword>
<keyword id="KW-0493">Microtubule</keyword>
<keyword id="KW-1185">Reference proteome</keyword>
<keyword id="KW-0862">Zinc</keyword>
<keyword id="KW-0863">Zinc-finger</keyword>
<accession>Q5REJ9</accession>
<organism>
    <name type="scientific">Pongo abelii</name>
    <name type="common">Sumatran orangutan</name>
    <name type="synonym">Pongo pygmaeus abelii</name>
    <dbReference type="NCBI Taxonomy" id="9601"/>
    <lineage>
        <taxon>Eukaryota</taxon>
        <taxon>Metazoa</taxon>
        <taxon>Chordata</taxon>
        <taxon>Craniata</taxon>
        <taxon>Vertebrata</taxon>
        <taxon>Euteleostomi</taxon>
        <taxon>Mammalia</taxon>
        <taxon>Eutheria</taxon>
        <taxon>Euarchontoglires</taxon>
        <taxon>Primates</taxon>
        <taxon>Haplorrhini</taxon>
        <taxon>Catarrhini</taxon>
        <taxon>Hominidae</taxon>
        <taxon>Pongo</taxon>
    </lineage>
</organism>
<feature type="chain" id="PRO_0000056284" description="Tripartite motif-containing protein 54">
    <location>
        <begin position="1"/>
        <end position="358"/>
    </location>
</feature>
<feature type="domain" description="COS" evidence="5">
    <location>
        <begin position="271"/>
        <end position="329"/>
    </location>
</feature>
<feature type="zinc finger region" description="RING-type" evidence="4">
    <location>
        <begin position="26"/>
        <end position="82"/>
    </location>
</feature>
<feature type="zinc finger region" description="B box-type" evidence="3">
    <location>
        <begin position="121"/>
        <end position="163"/>
    </location>
</feature>
<feature type="region of interest" description="Mediates microtubule-binding and homooligomerization" evidence="1">
    <location>
        <begin position="168"/>
        <end position="211"/>
    </location>
</feature>
<feature type="region of interest" description="Disordered" evidence="6">
    <location>
        <begin position="326"/>
        <end position="358"/>
    </location>
</feature>
<feature type="coiled-coil region" evidence="2">
    <location>
        <begin position="194"/>
        <end position="258"/>
    </location>
</feature>
<feature type="compositionally biased region" description="Acidic residues" evidence="6">
    <location>
        <begin position="334"/>
        <end position="345"/>
    </location>
</feature>
<feature type="binding site" evidence="3">
    <location>
        <position position="126"/>
    </location>
    <ligand>
        <name>Zn(2+)</name>
        <dbReference type="ChEBI" id="CHEBI:29105"/>
    </ligand>
</feature>
<feature type="binding site" evidence="3">
    <location>
        <position position="129"/>
    </location>
    <ligand>
        <name>Zn(2+)</name>
        <dbReference type="ChEBI" id="CHEBI:29105"/>
    </ligand>
</feature>
<feature type="binding site" evidence="3">
    <location>
        <position position="149"/>
    </location>
    <ligand>
        <name>Zn(2+)</name>
        <dbReference type="ChEBI" id="CHEBI:29105"/>
    </ligand>
</feature>
<feature type="binding site" evidence="3">
    <location>
        <position position="155"/>
    </location>
    <ligand>
        <name>Zn(2+)</name>
        <dbReference type="ChEBI" id="CHEBI:29105"/>
    </ligand>
</feature>
<proteinExistence type="evidence at transcript level"/>
<reference key="1">
    <citation type="submission" date="2004-11" db="EMBL/GenBank/DDBJ databases">
        <authorList>
            <consortium name="The German cDNA consortium"/>
        </authorList>
    </citation>
    <scope>NUCLEOTIDE SEQUENCE [LARGE SCALE MRNA]</scope>
    <source>
        <tissue>Heart</tissue>
    </source>
</reference>
<comment type="function">
    <text evidence="1">May bind and stabilize microtubules during myotubes formation.</text>
</comment>
<comment type="subunit">
    <text evidence="1">Homooligomer and heterooligomer. Interacts with TRIM63 and probably with TRIM55. Interacts with tubulin (By similarity).</text>
</comment>
<comment type="subcellular location">
    <subcellularLocation>
        <location evidence="1">Cytoplasm</location>
        <location evidence="1">Cytoskeleton</location>
    </subcellularLocation>
    <subcellularLocation>
        <location evidence="1">Cytoplasm</location>
        <location evidence="1">Myofibril</location>
        <location evidence="1">Sarcomere</location>
        <location evidence="1">Z line</location>
    </subcellularLocation>
    <text evidence="1">Associates with microtubules. Localizes to the Z-lines in skeletal muscles (By similarity).</text>
</comment>
<dbReference type="EMBL" id="CR857526">
    <property type="protein sequence ID" value="CAH89808.1"/>
    <property type="molecule type" value="mRNA"/>
</dbReference>
<dbReference type="RefSeq" id="NP_001124836.1">
    <property type="nucleotide sequence ID" value="NM_001131364.1"/>
</dbReference>
<dbReference type="SMR" id="Q5REJ9"/>
<dbReference type="FunCoup" id="Q5REJ9">
    <property type="interactions" value="96"/>
</dbReference>
<dbReference type="STRING" id="9601.ENSPPYP00000014021"/>
<dbReference type="Ensembl" id="ENSPPYT00000062312.1">
    <property type="protein sequence ID" value="ENSPPYP00000026265.1"/>
    <property type="gene ID" value="ENSPPYG00000031097.1"/>
</dbReference>
<dbReference type="GeneID" id="100171694"/>
<dbReference type="KEGG" id="pon:100171694"/>
<dbReference type="CTD" id="57159"/>
<dbReference type="eggNOG" id="KOG2177">
    <property type="taxonomic scope" value="Eukaryota"/>
</dbReference>
<dbReference type="GeneTree" id="ENSGT00940000154004"/>
<dbReference type="InParanoid" id="Q5REJ9"/>
<dbReference type="OrthoDB" id="5351233at2759"/>
<dbReference type="Proteomes" id="UP000001595">
    <property type="component" value="Chromosome 2A"/>
</dbReference>
<dbReference type="GO" id="GO:0005874">
    <property type="term" value="C:microtubule"/>
    <property type="evidence" value="ECO:0007669"/>
    <property type="project" value="UniProtKB-KW"/>
</dbReference>
<dbReference type="GO" id="GO:0030018">
    <property type="term" value="C:Z disc"/>
    <property type="evidence" value="ECO:0007669"/>
    <property type="project" value="UniProtKB-SubCell"/>
</dbReference>
<dbReference type="GO" id="GO:0008270">
    <property type="term" value="F:zinc ion binding"/>
    <property type="evidence" value="ECO:0007669"/>
    <property type="project" value="UniProtKB-KW"/>
</dbReference>
<dbReference type="GO" id="GO:0030154">
    <property type="term" value="P:cell differentiation"/>
    <property type="evidence" value="ECO:0007669"/>
    <property type="project" value="UniProtKB-KW"/>
</dbReference>
<dbReference type="CDD" id="cd19833">
    <property type="entry name" value="Bbox2_MuRF3_C-II"/>
    <property type="match status" value="1"/>
</dbReference>
<dbReference type="CDD" id="cd16761">
    <property type="entry name" value="RING-HC_MuRF3"/>
    <property type="match status" value="1"/>
</dbReference>
<dbReference type="FunFam" id="3.30.40.10:FF:000014">
    <property type="entry name" value="probable E3 ubiquitin-protein ligase MID2"/>
    <property type="match status" value="1"/>
</dbReference>
<dbReference type="FunFam" id="1.20.5.170:FF:000022">
    <property type="entry name" value="Tripartite motif containing 55"/>
    <property type="match status" value="1"/>
</dbReference>
<dbReference type="Gene3D" id="1.20.5.170">
    <property type="match status" value="1"/>
</dbReference>
<dbReference type="Gene3D" id="3.30.160.60">
    <property type="entry name" value="Classic Zinc Finger"/>
    <property type="match status" value="1"/>
</dbReference>
<dbReference type="Gene3D" id="3.30.40.10">
    <property type="entry name" value="Zinc/RING finger domain, C3HC4 (zinc finger)"/>
    <property type="match status" value="1"/>
</dbReference>
<dbReference type="InterPro" id="IPR017903">
    <property type="entry name" value="COS_domain"/>
</dbReference>
<dbReference type="InterPro" id="IPR050143">
    <property type="entry name" value="TRIM/RBCC"/>
</dbReference>
<dbReference type="InterPro" id="IPR033492">
    <property type="entry name" value="Trim54_Bbox2_Zfn"/>
</dbReference>
<dbReference type="InterPro" id="IPR042752">
    <property type="entry name" value="TRIM54_RING-HC"/>
</dbReference>
<dbReference type="InterPro" id="IPR027370">
    <property type="entry name" value="Znf-RING_euk"/>
</dbReference>
<dbReference type="InterPro" id="IPR000315">
    <property type="entry name" value="Znf_B-box"/>
</dbReference>
<dbReference type="InterPro" id="IPR001841">
    <property type="entry name" value="Znf_RING"/>
</dbReference>
<dbReference type="InterPro" id="IPR013083">
    <property type="entry name" value="Znf_RING/FYVE/PHD"/>
</dbReference>
<dbReference type="InterPro" id="IPR017907">
    <property type="entry name" value="Znf_RING_CS"/>
</dbReference>
<dbReference type="PANTHER" id="PTHR24103">
    <property type="entry name" value="E3 UBIQUITIN-PROTEIN LIGASE TRIM"/>
    <property type="match status" value="1"/>
</dbReference>
<dbReference type="Pfam" id="PF00643">
    <property type="entry name" value="zf-B_box"/>
    <property type="match status" value="1"/>
</dbReference>
<dbReference type="Pfam" id="PF13445">
    <property type="entry name" value="zf-RING_UBOX"/>
    <property type="match status" value="1"/>
</dbReference>
<dbReference type="SMART" id="SM00336">
    <property type="entry name" value="BBOX"/>
    <property type="match status" value="1"/>
</dbReference>
<dbReference type="SMART" id="SM00184">
    <property type="entry name" value="RING"/>
    <property type="match status" value="1"/>
</dbReference>
<dbReference type="SUPFAM" id="SSF57845">
    <property type="entry name" value="B-box zinc-binding domain"/>
    <property type="match status" value="1"/>
</dbReference>
<dbReference type="SUPFAM" id="SSF57850">
    <property type="entry name" value="RING/U-box"/>
    <property type="match status" value="1"/>
</dbReference>
<dbReference type="PROSITE" id="PS51262">
    <property type="entry name" value="COS"/>
    <property type="match status" value="1"/>
</dbReference>
<dbReference type="PROSITE" id="PS50119">
    <property type="entry name" value="ZF_BBOX"/>
    <property type="match status" value="1"/>
</dbReference>
<dbReference type="PROSITE" id="PS00518">
    <property type="entry name" value="ZF_RING_1"/>
    <property type="match status" value="1"/>
</dbReference>
<dbReference type="PROSITE" id="PS50089">
    <property type="entry name" value="ZF_RING_2"/>
    <property type="match status" value="1"/>
</dbReference>